<organism>
    <name type="scientific">Campylobacter concisus (strain 13826)</name>
    <dbReference type="NCBI Taxonomy" id="360104"/>
    <lineage>
        <taxon>Bacteria</taxon>
        <taxon>Pseudomonadati</taxon>
        <taxon>Campylobacterota</taxon>
        <taxon>Epsilonproteobacteria</taxon>
        <taxon>Campylobacterales</taxon>
        <taxon>Campylobacteraceae</taxon>
        <taxon>Campylobacter</taxon>
    </lineage>
</organism>
<proteinExistence type="inferred from homology"/>
<evidence type="ECO:0000255" key="1">
    <source>
        <dbReference type="HAMAP-Rule" id="MF_00375"/>
    </source>
</evidence>
<name>GSA_CAMC1</name>
<feature type="chain" id="PRO_1000072151" description="Glutamate-1-semialdehyde 2,1-aminomutase">
    <location>
        <begin position="1"/>
        <end position="427"/>
    </location>
</feature>
<feature type="modified residue" description="N6-(pyridoxal phosphate)lysine" evidence="1">
    <location>
        <position position="264"/>
    </location>
</feature>
<dbReference type="EC" id="5.4.3.8" evidence="1"/>
<dbReference type="EMBL" id="CP000792">
    <property type="protein sequence ID" value="EAT98029.1"/>
    <property type="molecule type" value="Genomic_DNA"/>
</dbReference>
<dbReference type="RefSeq" id="WP_012001454.1">
    <property type="nucleotide sequence ID" value="NC_009802.2"/>
</dbReference>
<dbReference type="SMR" id="A7ZCH5"/>
<dbReference type="STRING" id="360104.CCC13826_0834"/>
<dbReference type="KEGG" id="cco:CCC13826_0834"/>
<dbReference type="eggNOG" id="COG0001">
    <property type="taxonomic scope" value="Bacteria"/>
</dbReference>
<dbReference type="HOGENOM" id="CLU_016922_1_5_7"/>
<dbReference type="OrthoDB" id="9801052at2"/>
<dbReference type="UniPathway" id="UPA00251">
    <property type="reaction ID" value="UER00317"/>
</dbReference>
<dbReference type="Proteomes" id="UP000001121">
    <property type="component" value="Chromosome"/>
</dbReference>
<dbReference type="GO" id="GO:0005737">
    <property type="term" value="C:cytoplasm"/>
    <property type="evidence" value="ECO:0007669"/>
    <property type="project" value="UniProtKB-SubCell"/>
</dbReference>
<dbReference type="GO" id="GO:0042286">
    <property type="term" value="F:glutamate-1-semialdehyde 2,1-aminomutase activity"/>
    <property type="evidence" value="ECO:0007669"/>
    <property type="project" value="UniProtKB-UniRule"/>
</dbReference>
<dbReference type="GO" id="GO:0030170">
    <property type="term" value="F:pyridoxal phosphate binding"/>
    <property type="evidence" value="ECO:0007669"/>
    <property type="project" value="InterPro"/>
</dbReference>
<dbReference type="GO" id="GO:0008483">
    <property type="term" value="F:transaminase activity"/>
    <property type="evidence" value="ECO:0007669"/>
    <property type="project" value="InterPro"/>
</dbReference>
<dbReference type="GO" id="GO:0006782">
    <property type="term" value="P:protoporphyrinogen IX biosynthetic process"/>
    <property type="evidence" value="ECO:0007669"/>
    <property type="project" value="UniProtKB-UniRule"/>
</dbReference>
<dbReference type="CDD" id="cd00610">
    <property type="entry name" value="OAT_like"/>
    <property type="match status" value="1"/>
</dbReference>
<dbReference type="FunFam" id="3.40.640.10:FF:000021">
    <property type="entry name" value="Glutamate-1-semialdehyde 2,1-aminomutase"/>
    <property type="match status" value="1"/>
</dbReference>
<dbReference type="Gene3D" id="3.90.1150.10">
    <property type="entry name" value="Aspartate Aminotransferase, domain 1"/>
    <property type="match status" value="1"/>
</dbReference>
<dbReference type="Gene3D" id="3.40.640.10">
    <property type="entry name" value="Type I PLP-dependent aspartate aminotransferase-like (Major domain)"/>
    <property type="match status" value="1"/>
</dbReference>
<dbReference type="HAMAP" id="MF_00375">
    <property type="entry name" value="HemL_aminotrans_3"/>
    <property type="match status" value="1"/>
</dbReference>
<dbReference type="InterPro" id="IPR004639">
    <property type="entry name" value="4pyrrol_synth_GluAld_NH2Trfase"/>
</dbReference>
<dbReference type="InterPro" id="IPR005814">
    <property type="entry name" value="Aminotrans_3"/>
</dbReference>
<dbReference type="InterPro" id="IPR049704">
    <property type="entry name" value="Aminotrans_3_PPA_site"/>
</dbReference>
<dbReference type="InterPro" id="IPR015424">
    <property type="entry name" value="PyrdxlP-dep_Trfase"/>
</dbReference>
<dbReference type="InterPro" id="IPR015421">
    <property type="entry name" value="PyrdxlP-dep_Trfase_major"/>
</dbReference>
<dbReference type="InterPro" id="IPR015422">
    <property type="entry name" value="PyrdxlP-dep_Trfase_small"/>
</dbReference>
<dbReference type="NCBIfam" id="TIGR00713">
    <property type="entry name" value="hemL"/>
    <property type="match status" value="1"/>
</dbReference>
<dbReference type="NCBIfam" id="NF000818">
    <property type="entry name" value="PRK00062.1"/>
    <property type="match status" value="1"/>
</dbReference>
<dbReference type="PANTHER" id="PTHR43713">
    <property type="entry name" value="GLUTAMATE-1-SEMIALDEHYDE 2,1-AMINOMUTASE"/>
    <property type="match status" value="1"/>
</dbReference>
<dbReference type="PANTHER" id="PTHR43713:SF3">
    <property type="entry name" value="GLUTAMATE-1-SEMIALDEHYDE 2,1-AMINOMUTASE 1, CHLOROPLASTIC-RELATED"/>
    <property type="match status" value="1"/>
</dbReference>
<dbReference type="Pfam" id="PF00202">
    <property type="entry name" value="Aminotran_3"/>
    <property type="match status" value="1"/>
</dbReference>
<dbReference type="SUPFAM" id="SSF53383">
    <property type="entry name" value="PLP-dependent transferases"/>
    <property type="match status" value="1"/>
</dbReference>
<dbReference type="PROSITE" id="PS00600">
    <property type="entry name" value="AA_TRANSFER_CLASS_3"/>
    <property type="match status" value="1"/>
</dbReference>
<gene>
    <name evidence="1" type="primary">hemL</name>
    <name type="ordered locus">Ccon26_05950</name>
    <name type="ORF">CCC13826_0834</name>
</gene>
<sequence>MTNKEAFSEAKKYIPGGVNSPVRAFGSVGGEPVMIDHARGAYLYDVEGKKYLDFIQSWGPLIFGHCDKDIEEAIISAVKQGVSYGAPSPKETALAKLICDEFKQIDKIRFVSSGTEATMSAIRVARGYAKKDGLIKFEGCYHGHSDALLIKAGSGATTYGNASSGGVPQDVVKNTFLAIYNDIESVKAIFENNKDKIGVVIIEPIAGNMGLVPADKKFLRELRELCDKFGAVLILDEVMSGFRASRLGSYPFHEVDADLVTFGKVIGGGMNVAAFGGKAKIMDCLSPEGAVYQAGTLSGNPVAMSAGIAAISKINSDVNLYVRLEKLALKLMDGFKEAAKSAGITIQTEVRGSMFGYFFTDHVVKNYDDALKSDTKLFAKFHQAMLKRGIYLAPSQFETGFICDAMSEADIDLAVNAAKEAFLEIKA</sequence>
<reference key="1">
    <citation type="submission" date="2007-10" db="EMBL/GenBank/DDBJ databases">
        <title>Genome sequence of Campylobacter concisus 13826 isolated from human feces.</title>
        <authorList>
            <person name="Fouts D.E."/>
            <person name="Mongodin E.F."/>
            <person name="Puiu D."/>
            <person name="Sebastian Y."/>
            <person name="Miller W.G."/>
            <person name="Mandrell R.E."/>
            <person name="On S."/>
            <person name="Nelson K.E."/>
        </authorList>
    </citation>
    <scope>NUCLEOTIDE SEQUENCE [LARGE SCALE GENOMIC DNA]</scope>
    <source>
        <strain>13826</strain>
    </source>
</reference>
<keyword id="KW-0963">Cytoplasm</keyword>
<keyword id="KW-0413">Isomerase</keyword>
<keyword id="KW-0627">Porphyrin biosynthesis</keyword>
<keyword id="KW-0663">Pyridoxal phosphate</keyword>
<protein>
    <recommendedName>
        <fullName evidence="1">Glutamate-1-semialdehyde 2,1-aminomutase</fullName>
        <shortName evidence="1">GSA</shortName>
        <ecNumber evidence="1">5.4.3.8</ecNumber>
    </recommendedName>
    <alternativeName>
        <fullName evidence="1">Glutamate-1-semialdehyde aminotransferase</fullName>
        <shortName evidence="1">GSA-AT</shortName>
    </alternativeName>
</protein>
<comment type="catalytic activity">
    <reaction evidence="1">
        <text>(S)-4-amino-5-oxopentanoate = 5-aminolevulinate</text>
        <dbReference type="Rhea" id="RHEA:14265"/>
        <dbReference type="ChEBI" id="CHEBI:57501"/>
        <dbReference type="ChEBI" id="CHEBI:356416"/>
        <dbReference type="EC" id="5.4.3.8"/>
    </reaction>
</comment>
<comment type="cofactor">
    <cofactor evidence="1">
        <name>pyridoxal 5'-phosphate</name>
        <dbReference type="ChEBI" id="CHEBI:597326"/>
    </cofactor>
</comment>
<comment type="pathway">
    <text evidence="1">Porphyrin-containing compound metabolism; protoporphyrin-IX biosynthesis; 5-aminolevulinate from L-glutamyl-tRNA(Glu): step 2/2.</text>
</comment>
<comment type="subunit">
    <text evidence="1">Homodimer.</text>
</comment>
<comment type="subcellular location">
    <subcellularLocation>
        <location evidence="1">Cytoplasm</location>
    </subcellularLocation>
</comment>
<comment type="similarity">
    <text evidence="1">Belongs to the class-III pyridoxal-phosphate-dependent aminotransferase family. HemL subfamily.</text>
</comment>
<accession>A7ZCH5</accession>